<feature type="chain" id="PRO_0000114339" description="Cell division protein FtsZ">
    <location>
        <begin position="1"/>
        <end position="394"/>
    </location>
</feature>
<feature type="binding site" evidence="1">
    <location>
        <begin position="21"/>
        <end position="25"/>
    </location>
    <ligand>
        <name>GTP</name>
        <dbReference type="ChEBI" id="CHEBI:37565"/>
    </ligand>
</feature>
<feature type="binding site" evidence="1">
    <location>
        <begin position="108"/>
        <end position="110"/>
    </location>
    <ligand>
        <name>GTP</name>
        <dbReference type="ChEBI" id="CHEBI:37565"/>
    </ligand>
</feature>
<feature type="binding site" evidence="1">
    <location>
        <position position="139"/>
    </location>
    <ligand>
        <name>GTP</name>
        <dbReference type="ChEBI" id="CHEBI:37565"/>
    </ligand>
</feature>
<feature type="binding site" evidence="1">
    <location>
        <position position="143"/>
    </location>
    <ligand>
        <name>GTP</name>
        <dbReference type="ChEBI" id="CHEBI:37565"/>
    </ligand>
</feature>
<feature type="binding site" evidence="1">
    <location>
        <position position="187"/>
    </location>
    <ligand>
        <name>GTP</name>
        <dbReference type="ChEBI" id="CHEBI:37565"/>
    </ligand>
</feature>
<organism>
    <name type="scientific">Azotobacter vinelandii</name>
    <dbReference type="NCBI Taxonomy" id="354"/>
    <lineage>
        <taxon>Bacteria</taxon>
        <taxon>Pseudomonadati</taxon>
        <taxon>Pseudomonadota</taxon>
        <taxon>Gammaproteobacteria</taxon>
        <taxon>Pseudomonadales</taxon>
        <taxon>Pseudomonadaceae</taxon>
        <taxon>Azotobacter</taxon>
    </lineage>
</organism>
<keyword id="KW-0131">Cell cycle</keyword>
<keyword id="KW-0132">Cell division</keyword>
<keyword id="KW-0963">Cytoplasm</keyword>
<keyword id="KW-0342">GTP-binding</keyword>
<keyword id="KW-0547">Nucleotide-binding</keyword>
<keyword id="KW-0717">Septation</keyword>
<sequence length="394" mass="41153">MFELVDNVPQSAVIKVIGVGGGGGNAVNHMAATSIEGIEFICANTDAQALKNITARTVLQLGSGVTKGLGAGANPEVGREAAMEDRERIAEVLQGTDMVFITTGMGGGTGTGAAPVIAEVAKGLGILTVAVVTRPFPFEGRKRMQVAEEGIRLLAEHVDSLITIPNEKLLTILGKDASLLSAFAKADDVLAGAVRGISDIIKLSGMINVDFADVKTVMSEMGMAMMGTGFASGPNRAREATEAAIRNPLLEDVHLQGARGILVNITAGPDLSLGEYSDVGNIIEQFASDQAMVKVGTVIDPDMRDELHVTVVATGLGTRADKPMKVVDNTLQPAGAAAAAPAVPRGDQTVNYKDYERPTVQRQSHAASATAAKINPQDDLDYLDIPAFLRRQAD</sequence>
<accession>P77817</accession>
<comment type="function">
    <text evidence="1">Essential cell division protein that forms a contractile ring structure (Z ring) at the future cell division site. The regulation of the ring assembly controls the timing and the location of cell division. One of the functions of the FtsZ ring is to recruit other cell division proteins to the septum to produce a new cell wall between the dividing cells. Binds GTP and shows GTPase activity.</text>
</comment>
<comment type="subunit">
    <text evidence="1">Homodimer. Polymerizes to form a dynamic ring structure in a strictly GTP-dependent manner. Interacts directly with several other division proteins.</text>
</comment>
<comment type="subcellular location">
    <subcellularLocation>
        <location evidence="1">Cytoplasm</location>
    </subcellularLocation>
    <text evidence="1">Assembles at midcell at the inner surface of the cytoplasmic membrane.</text>
</comment>
<comment type="similarity">
    <text evidence="1">Belongs to the FtsZ family.</text>
</comment>
<evidence type="ECO:0000255" key="1">
    <source>
        <dbReference type="HAMAP-Rule" id="MF_00909"/>
    </source>
</evidence>
<dbReference type="EMBL" id="U65939">
    <property type="protein sequence ID" value="AAC24603.1"/>
    <property type="molecule type" value="Genomic_DNA"/>
</dbReference>
<dbReference type="SMR" id="P77817"/>
<dbReference type="GO" id="GO:0032153">
    <property type="term" value="C:cell division site"/>
    <property type="evidence" value="ECO:0007669"/>
    <property type="project" value="UniProtKB-UniRule"/>
</dbReference>
<dbReference type="GO" id="GO:0005737">
    <property type="term" value="C:cytoplasm"/>
    <property type="evidence" value="ECO:0007669"/>
    <property type="project" value="UniProtKB-SubCell"/>
</dbReference>
<dbReference type="GO" id="GO:0005525">
    <property type="term" value="F:GTP binding"/>
    <property type="evidence" value="ECO:0007669"/>
    <property type="project" value="UniProtKB-UniRule"/>
</dbReference>
<dbReference type="GO" id="GO:0003924">
    <property type="term" value="F:GTPase activity"/>
    <property type="evidence" value="ECO:0007669"/>
    <property type="project" value="UniProtKB-UniRule"/>
</dbReference>
<dbReference type="GO" id="GO:0000917">
    <property type="term" value="P:division septum assembly"/>
    <property type="evidence" value="ECO:0007669"/>
    <property type="project" value="UniProtKB-KW"/>
</dbReference>
<dbReference type="GO" id="GO:0043093">
    <property type="term" value="P:FtsZ-dependent cytokinesis"/>
    <property type="evidence" value="ECO:0007669"/>
    <property type="project" value="UniProtKB-UniRule"/>
</dbReference>
<dbReference type="GO" id="GO:0051258">
    <property type="term" value="P:protein polymerization"/>
    <property type="evidence" value="ECO:0007669"/>
    <property type="project" value="UniProtKB-UniRule"/>
</dbReference>
<dbReference type="CDD" id="cd02201">
    <property type="entry name" value="FtsZ_type1"/>
    <property type="match status" value="1"/>
</dbReference>
<dbReference type="FunFam" id="3.40.50.1440:FF:000023">
    <property type="entry name" value="Cell division protein FtsZ"/>
    <property type="match status" value="1"/>
</dbReference>
<dbReference type="Gene3D" id="3.30.1330.20">
    <property type="entry name" value="Tubulin/FtsZ, C-terminal domain"/>
    <property type="match status" value="1"/>
</dbReference>
<dbReference type="Gene3D" id="3.40.50.1440">
    <property type="entry name" value="Tubulin/FtsZ, GTPase domain"/>
    <property type="match status" value="1"/>
</dbReference>
<dbReference type="HAMAP" id="MF_00909">
    <property type="entry name" value="FtsZ"/>
    <property type="match status" value="1"/>
</dbReference>
<dbReference type="InterPro" id="IPR000158">
    <property type="entry name" value="Cell_div_FtsZ"/>
</dbReference>
<dbReference type="InterPro" id="IPR020805">
    <property type="entry name" value="Cell_div_FtsZ_CS"/>
</dbReference>
<dbReference type="InterPro" id="IPR045061">
    <property type="entry name" value="FtsZ/CetZ"/>
</dbReference>
<dbReference type="InterPro" id="IPR024757">
    <property type="entry name" value="FtsZ_C"/>
</dbReference>
<dbReference type="InterPro" id="IPR008280">
    <property type="entry name" value="Tub_FtsZ_C"/>
</dbReference>
<dbReference type="InterPro" id="IPR037103">
    <property type="entry name" value="Tubulin/FtsZ-like_C"/>
</dbReference>
<dbReference type="InterPro" id="IPR018316">
    <property type="entry name" value="Tubulin/FtsZ_2-layer-sand-dom"/>
</dbReference>
<dbReference type="InterPro" id="IPR036525">
    <property type="entry name" value="Tubulin/FtsZ_GTPase_sf"/>
</dbReference>
<dbReference type="InterPro" id="IPR003008">
    <property type="entry name" value="Tubulin_FtsZ_GTPase"/>
</dbReference>
<dbReference type="NCBIfam" id="TIGR00065">
    <property type="entry name" value="ftsZ"/>
    <property type="match status" value="1"/>
</dbReference>
<dbReference type="PANTHER" id="PTHR30314">
    <property type="entry name" value="CELL DIVISION PROTEIN FTSZ-RELATED"/>
    <property type="match status" value="1"/>
</dbReference>
<dbReference type="PANTHER" id="PTHR30314:SF3">
    <property type="entry name" value="MITOCHONDRIAL DIVISION PROTEIN FSZA"/>
    <property type="match status" value="1"/>
</dbReference>
<dbReference type="Pfam" id="PF12327">
    <property type="entry name" value="FtsZ_C"/>
    <property type="match status" value="1"/>
</dbReference>
<dbReference type="Pfam" id="PF00091">
    <property type="entry name" value="Tubulin"/>
    <property type="match status" value="1"/>
</dbReference>
<dbReference type="PRINTS" id="PR00423">
    <property type="entry name" value="CELLDVISFTSZ"/>
</dbReference>
<dbReference type="SMART" id="SM00864">
    <property type="entry name" value="Tubulin"/>
    <property type="match status" value="1"/>
</dbReference>
<dbReference type="SMART" id="SM00865">
    <property type="entry name" value="Tubulin_C"/>
    <property type="match status" value="1"/>
</dbReference>
<dbReference type="SUPFAM" id="SSF55307">
    <property type="entry name" value="Tubulin C-terminal domain-like"/>
    <property type="match status" value="1"/>
</dbReference>
<dbReference type="SUPFAM" id="SSF52490">
    <property type="entry name" value="Tubulin nucleotide-binding domain-like"/>
    <property type="match status" value="1"/>
</dbReference>
<dbReference type="PROSITE" id="PS01134">
    <property type="entry name" value="FTSZ_1"/>
    <property type="match status" value="1"/>
</dbReference>
<dbReference type="PROSITE" id="PS01135">
    <property type="entry name" value="FTSZ_2"/>
    <property type="match status" value="1"/>
</dbReference>
<gene>
    <name evidence="1" type="primary">ftsZ</name>
</gene>
<proteinExistence type="evidence at protein level"/>
<name>FTSZ_AZOVI</name>
<reference key="1">
    <citation type="journal article" date="1998" name="Cell Motil. Cytoskeleton">
        <title>FtsZ from Escherichia coli, Azotobacter vinelandii, and Thermotoga maritima -- quantitation, GTP hydrolysis, and assembly.</title>
        <authorList>
            <person name="Lu C."/>
            <person name="Stricker J."/>
            <person name="Erickson H.P."/>
        </authorList>
    </citation>
    <scope>NUCLEOTIDE SEQUENCE [GENOMIC DNA]</scope>
    <scope>CHARACTERIZATION</scope>
    <source>
        <strain>DJ116</strain>
    </source>
</reference>
<protein>
    <recommendedName>
        <fullName evidence="1">Cell division protein FtsZ</fullName>
    </recommendedName>
</protein>